<reference key="1">
    <citation type="journal article" date="2008" name="BMC Genomics">
        <title>Genomics of an extreme psychrophile, Psychromonas ingrahamii.</title>
        <authorList>
            <person name="Riley M."/>
            <person name="Staley J.T."/>
            <person name="Danchin A."/>
            <person name="Wang T.Z."/>
            <person name="Brettin T.S."/>
            <person name="Hauser L.J."/>
            <person name="Land M.L."/>
            <person name="Thompson L.S."/>
        </authorList>
    </citation>
    <scope>NUCLEOTIDE SEQUENCE [LARGE SCALE GENOMIC DNA]</scope>
    <source>
        <strain>DSM 17664 / CCUG 51855 / 37</strain>
    </source>
</reference>
<protein>
    <recommendedName>
        <fullName evidence="1">2,3-bisphosphoglycerate-independent phosphoglycerate mutase</fullName>
        <shortName evidence="1">BPG-independent PGAM</shortName>
        <shortName evidence="1">Phosphoglyceromutase</shortName>
        <shortName evidence="1">iPGM</shortName>
        <ecNumber evidence="1">5.4.2.12</ecNumber>
    </recommendedName>
</protein>
<keyword id="KW-0324">Glycolysis</keyword>
<keyword id="KW-0413">Isomerase</keyword>
<keyword id="KW-0464">Manganese</keyword>
<keyword id="KW-0479">Metal-binding</keyword>
<keyword id="KW-1185">Reference proteome</keyword>
<evidence type="ECO:0000255" key="1">
    <source>
        <dbReference type="HAMAP-Rule" id="MF_01038"/>
    </source>
</evidence>
<name>GPMI_PSYIN</name>
<proteinExistence type="inferred from homology"/>
<dbReference type="EC" id="5.4.2.12" evidence="1"/>
<dbReference type="EMBL" id="CP000510">
    <property type="protein sequence ID" value="ABM04898.1"/>
    <property type="molecule type" value="Genomic_DNA"/>
</dbReference>
<dbReference type="RefSeq" id="WP_011771450.1">
    <property type="nucleotide sequence ID" value="NC_008709.1"/>
</dbReference>
<dbReference type="SMR" id="A1SZI3"/>
<dbReference type="STRING" id="357804.Ping_3211"/>
<dbReference type="KEGG" id="pin:Ping_3211"/>
<dbReference type="eggNOG" id="COG0696">
    <property type="taxonomic scope" value="Bacteria"/>
</dbReference>
<dbReference type="HOGENOM" id="CLU_026099_2_0_6"/>
<dbReference type="OrthoDB" id="9800863at2"/>
<dbReference type="UniPathway" id="UPA00109">
    <property type="reaction ID" value="UER00186"/>
</dbReference>
<dbReference type="Proteomes" id="UP000000639">
    <property type="component" value="Chromosome"/>
</dbReference>
<dbReference type="GO" id="GO:0005829">
    <property type="term" value="C:cytosol"/>
    <property type="evidence" value="ECO:0007669"/>
    <property type="project" value="TreeGrafter"/>
</dbReference>
<dbReference type="GO" id="GO:0030145">
    <property type="term" value="F:manganese ion binding"/>
    <property type="evidence" value="ECO:0007669"/>
    <property type="project" value="UniProtKB-UniRule"/>
</dbReference>
<dbReference type="GO" id="GO:0004619">
    <property type="term" value="F:phosphoglycerate mutase activity"/>
    <property type="evidence" value="ECO:0007669"/>
    <property type="project" value="UniProtKB-EC"/>
</dbReference>
<dbReference type="GO" id="GO:0006007">
    <property type="term" value="P:glucose catabolic process"/>
    <property type="evidence" value="ECO:0007669"/>
    <property type="project" value="InterPro"/>
</dbReference>
<dbReference type="GO" id="GO:0006096">
    <property type="term" value="P:glycolytic process"/>
    <property type="evidence" value="ECO:0007669"/>
    <property type="project" value="UniProtKB-UniRule"/>
</dbReference>
<dbReference type="CDD" id="cd16010">
    <property type="entry name" value="iPGM"/>
    <property type="match status" value="1"/>
</dbReference>
<dbReference type="FunFam" id="3.40.1450.10:FF:000001">
    <property type="entry name" value="2,3-bisphosphoglycerate-independent phosphoglycerate mutase"/>
    <property type="match status" value="1"/>
</dbReference>
<dbReference type="FunFam" id="3.40.720.10:FF:000001">
    <property type="entry name" value="2,3-bisphosphoglycerate-independent phosphoglycerate mutase"/>
    <property type="match status" value="1"/>
</dbReference>
<dbReference type="Gene3D" id="3.40.720.10">
    <property type="entry name" value="Alkaline Phosphatase, subunit A"/>
    <property type="match status" value="1"/>
</dbReference>
<dbReference type="Gene3D" id="3.40.1450.10">
    <property type="entry name" value="BPG-independent phosphoglycerate mutase, domain B"/>
    <property type="match status" value="1"/>
</dbReference>
<dbReference type="HAMAP" id="MF_01038">
    <property type="entry name" value="GpmI"/>
    <property type="match status" value="1"/>
</dbReference>
<dbReference type="InterPro" id="IPR017850">
    <property type="entry name" value="Alkaline_phosphatase_core_sf"/>
</dbReference>
<dbReference type="InterPro" id="IPR011258">
    <property type="entry name" value="BPG-indep_PGM_N"/>
</dbReference>
<dbReference type="InterPro" id="IPR006124">
    <property type="entry name" value="Metalloenzyme"/>
</dbReference>
<dbReference type="InterPro" id="IPR036646">
    <property type="entry name" value="PGAM_B_sf"/>
</dbReference>
<dbReference type="InterPro" id="IPR005995">
    <property type="entry name" value="Pgm_bpd_ind"/>
</dbReference>
<dbReference type="NCBIfam" id="TIGR01307">
    <property type="entry name" value="pgm_bpd_ind"/>
    <property type="match status" value="1"/>
</dbReference>
<dbReference type="NCBIfam" id="NF003897">
    <property type="entry name" value="PRK05434.1-5"/>
    <property type="match status" value="1"/>
</dbReference>
<dbReference type="PANTHER" id="PTHR31637">
    <property type="entry name" value="2,3-BISPHOSPHOGLYCERATE-INDEPENDENT PHOSPHOGLYCERATE MUTASE"/>
    <property type="match status" value="1"/>
</dbReference>
<dbReference type="PANTHER" id="PTHR31637:SF0">
    <property type="entry name" value="2,3-BISPHOSPHOGLYCERATE-INDEPENDENT PHOSPHOGLYCERATE MUTASE"/>
    <property type="match status" value="1"/>
</dbReference>
<dbReference type="Pfam" id="PF06415">
    <property type="entry name" value="iPGM_N"/>
    <property type="match status" value="1"/>
</dbReference>
<dbReference type="Pfam" id="PF01676">
    <property type="entry name" value="Metalloenzyme"/>
    <property type="match status" value="1"/>
</dbReference>
<dbReference type="PIRSF" id="PIRSF001492">
    <property type="entry name" value="IPGAM"/>
    <property type="match status" value="1"/>
</dbReference>
<dbReference type="SUPFAM" id="SSF64158">
    <property type="entry name" value="2,3-Bisphosphoglycerate-independent phosphoglycerate mutase, substrate-binding domain"/>
    <property type="match status" value="1"/>
</dbReference>
<dbReference type="SUPFAM" id="SSF53649">
    <property type="entry name" value="Alkaline phosphatase-like"/>
    <property type="match status" value="1"/>
</dbReference>
<gene>
    <name evidence="1" type="primary">gpmI</name>
    <name type="ordered locus">Ping_3211</name>
</gene>
<organism>
    <name type="scientific">Psychromonas ingrahamii (strain DSM 17664 / CCUG 51855 / 37)</name>
    <dbReference type="NCBI Taxonomy" id="357804"/>
    <lineage>
        <taxon>Bacteria</taxon>
        <taxon>Pseudomonadati</taxon>
        <taxon>Pseudomonadota</taxon>
        <taxon>Gammaproteobacteria</taxon>
        <taxon>Alteromonadales</taxon>
        <taxon>Psychromonadaceae</taxon>
        <taxon>Psychromonas</taxon>
    </lineage>
</organism>
<feature type="chain" id="PRO_1000063993" description="2,3-bisphosphoglycerate-independent phosphoglycerate mutase">
    <location>
        <begin position="1"/>
        <end position="509"/>
    </location>
</feature>
<feature type="active site" description="Phosphoserine intermediate" evidence="1">
    <location>
        <position position="64"/>
    </location>
</feature>
<feature type="binding site" evidence="1">
    <location>
        <position position="14"/>
    </location>
    <ligand>
        <name>Mn(2+)</name>
        <dbReference type="ChEBI" id="CHEBI:29035"/>
        <label>2</label>
    </ligand>
</feature>
<feature type="binding site" evidence="1">
    <location>
        <position position="64"/>
    </location>
    <ligand>
        <name>Mn(2+)</name>
        <dbReference type="ChEBI" id="CHEBI:29035"/>
        <label>2</label>
    </ligand>
</feature>
<feature type="binding site" evidence="1">
    <location>
        <position position="125"/>
    </location>
    <ligand>
        <name>substrate</name>
    </ligand>
</feature>
<feature type="binding site" evidence="1">
    <location>
        <begin position="155"/>
        <end position="156"/>
    </location>
    <ligand>
        <name>substrate</name>
    </ligand>
</feature>
<feature type="binding site" evidence="1">
    <location>
        <position position="187"/>
    </location>
    <ligand>
        <name>substrate</name>
    </ligand>
</feature>
<feature type="binding site" evidence="1">
    <location>
        <position position="193"/>
    </location>
    <ligand>
        <name>substrate</name>
    </ligand>
</feature>
<feature type="binding site" evidence="1">
    <location>
        <begin position="259"/>
        <end position="262"/>
    </location>
    <ligand>
        <name>substrate</name>
    </ligand>
</feature>
<feature type="binding site" evidence="1">
    <location>
        <position position="332"/>
    </location>
    <ligand>
        <name>substrate</name>
    </ligand>
</feature>
<feature type="binding site" evidence="1">
    <location>
        <position position="399"/>
    </location>
    <ligand>
        <name>Mn(2+)</name>
        <dbReference type="ChEBI" id="CHEBI:29035"/>
        <label>1</label>
    </ligand>
</feature>
<feature type="binding site" evidence="1">
    <location>
        <position position="403"/>
    </location>
    <ligand>
        <name>Mn(2+)</name>
        <dbReference type="ChEBI" id="CHEBI:29035"/>
        <label>1</label>
    </ligand>
</feature>
<feature type="binding site" evidence="1">
    <location>
        <position position="440"/>
    </location>
    <ligand>
        <name>Mn(2+)</name>
        <dbReference type="ChEBI" id="CHEBI:29035"/>
        <label>2</label>
    </ligand>
</feature>
<feature type="binding site" evidence="1">
    <location>
        <position position="441"/>
    </location>
    <ligand>
        <name>Mn(2+)</name>
        <dbReference type="ChEBI" id="CHEBI:29035"/>
        <label>2</label>
    </ligand>
</feature>
<feature type="binding site" evidence="1">
    <location>
        <position position="459"/>
    </location>
    <ligand>
        <name>Mn(2+)</name>
        <dbReference type="ChEBI" id="CHEBI:29035"/>
        <label>1</label>
    </ligand>
</feature>
<comment type="function">
    <text evidence="1">Catalyzes the interconversion of 2-phosphoglycerate and 3-phosphoglycerate.</text>
</comment>
<comment type="catalytic activity">
    <reaction evidence="1">
        <text>(2R)-2-phosphoglycerate = (2R)-3-phosphoglycerate</text>
        <dbReference type="Rhea" id="RHEA:15901"/>
        <dbReference type="ChEBI" id="CHEBI:58272"/>
        <dbReference type="ChEBI" id="CHEBI:58289"/>
        <dbReference type="EC" id="5.4.2.12"/>
    </reaction>
</comment>
<comment type="cofactor">
    <cofactor evidence="1">
        <name>Mn(2+)</name>
        <dbReference type="ChEBI" id="CHEBI:29035"/>
    </cofactor>
    <text evidence="1">Binds 2 manganese ions per subunit.</text>
</comment>
<comment type="pathway">
    <text evidence="1">Carbohydrate degradation; glycolysis; pyruvate from D-glyceraldehyde 3-phosphate: step 3/5.</text>
</comment>
<comment type="subunit">
    <text evidence="1">Monomer.</text>
</comment>
<comment type="similarity">
    <text evidence="1">Belongs to the BPG-independent phosphoglycerate mutase family.</text>
</comment>
<accession>A1SZI3</accession>
<sequence length="509" mass="54941">MTIAKKPLVLLIMDGWGYRPNMPDNAVANANTPVLDKLCKDYANNLLSASGMDVGLPDGQMGNSEVGHTNIGAGRTVYQNLTKVTKSISDGDFFDNKNFVDAVDQAVAAGKAVHIMGLASPGGVHSHDQHIVAAIELAAQRGAKNILVHAFLDGRDTPPRSAAGTLALFDEKYAQLGVGRTATLVGRYFAMDRDNRWDRVEQAYNLLTQAKADHTAESALAGLENAYARDENDEFVKATVIGEPAAIEDGDAVLFMNFRADRARELTYTFTDSNFSGFERASVPNVHFVTLTEFADDITAPAAFSSERLTNTLGEWLADHGKTQLRISETEKYAHVTFFFNGGVESEFKGEDRTLIKSPSVATYDMQPEMSSIELTEKLVSAIKSTKYDVIICNYPNGDMVGHTGVYDAAVKACEAVDSCVGKVVAALKEVDGECLITADHGNAEQMIDPVTGGIHTAHTNLPVPFIYVGRNAEMASGGRLCDIAPTMLNLMDMEIPAEMTGTPLITLK</sequence>